<keyword id="KW-0030">Aminoacyl-tRNA synthetase</keyword>
<keyword id="KW-0067">ATP-binding</keyword>
<keyword id="KW-0963">Cytoplasm</keyword>
<keyword id="KW-0436">Ligase</keyword>
<keyword id="KW-0460">Magnesium</keyword>
<keyword id="KW-0479">Metal-binding</keyword>
<keyword id="KW-0547">Nucleotide-binding</keyword>
<keyword id="KW-0648">Protein biosynthesis</keyword>
<keyword id="KW-1185">Reference proteome</keyword>
<keyword id="KW-0694">RNA-binding</keyword>
<keyword id="KW-0820">tRNA-binding</keyword>
<reference key="1">
    <citation type="journal article" date="2003" name="Nature">
        <title>Genome sequence of Bacillus cereus and comparative analysis with Bacillus anthracis.</title>
        <authorList>
            <person name="Ivanova N."/>
            <person name="Sorokin A."/>
            <person name="Anderson I."/>
            <person name="Galleron N."/>
            <person name="Candelon B."/>
            <person name="Kapatral V."/>
            <person name="Bhattacharyya A."/>
            <person name="Reznik G."/>
            <person name="Mikhailova N."/>
            <person name="Lapidus A."/>
            <person name="Chu L."/>
            <person name="Mazur M."/>
            <person name="Goltsman E."/>
            <person name="Larsen N."/>
            <person name="D'Souza M."/>
            <person name="Walunas T."/>
            <person name="Grechkin Y."/>
            <person name="Pusch G."/>
            <person name="Haselkorn R."/>
            <person name="Fonstein M."/>
            <person name="Ehrlich S.D."/>
            <person name="Overbeek R."/>
            <person name="Kyrpides N.C."/>
        </authorList>
    </citation>
    <scope>NUCLEOTIDE SEQUENCE [LARGE SCALE GENOMIC DNA]</scope>
    <source>
        <strain>ATCC 14579 / DSM 31 / CCUG 7414 / JCM 2152 / NBRC 15305 / NCIMB 9373 / NCTC 2599 / NRRL B-3711</strain>
    </source>
</reference>
<dbReference type="EC" id="6.1.1.20" evidence="1"/>
<dbReference type="EMBL" id="AE016877">
    <property type="protein sequence ID" value="AAP11467.1"/>
    <property type="molecule type" value="Genomic_DNA"/>
</dbReference>
<dbReference type="RefSeq" id="NP_834266.1">
    <property type="nucleotide sequence ID" value="NC_004722.1"/>
</dbReference>
<dbReference type="RefSeq" id="WP_000498186.1">
    <property type="nucleotide sequence ID" value="NZ_CP138336.1"/>
</dbReference>
<dbReference type="SMR" id="Q817I7"/>
<dbReference type="STRING" id="226900.BC_4560"/>
<dbReference type="MetOSite" id="Q817I7"/>
<dbReference type="KEGG" id="bce:BC4560"/>
<dbReference type="PATRIC" id="fig|226900.8.peg.4720"/>
<dbReference type="HOGENOM" id="CLU_016891_0_0_9"/>
<dbReference type="OrthoDB" id="9805455at2"/>
<dbReference type="Proteomes" id="UP000001417">
    <property type="component" value="Chromosome"/>
</dbReference>
<dbReference type="GO" id="GO:0009328">
    <property type="term" value="C:phenylalanine-tRNA ligase complex"/>
    <property type="evidence" value="ECO:0000318"/>
    <property type="project" value="GO_Central"/>
</dbReference>
<dbReference type="GO" id="GO:0005524">
    <property type="term" value="F:ATP binding"/>
    <property type="evidence" value="ECO:0007669"/>
    <property type="project" value="UniProtKB-UniRule"/>
</dbReference>
<dbReference type="GO" id="GO:0140096">
    <property type="term" value="F:catalytic activity, acting on a protein"/>
    <property type="evidence" value="ECO:0007669"/>
    <property type="project" value="UniProtKB-ARBA"/>
</dbReference>
<dbReference type="GO" id="GO:0000287">
    <property type="term" value="F:magnesium ion binding"/>
    <property type="evidence" value="ECO:0007669"/>
    <property type="project" value="UniProtKB-UniRule"/>
</dbReference>
<dbReference type="GO" id="GO:0004826">
    <property type="term" value="F:phenylalanine-tRNA ligase activity"/>
    <property type="evidence" value="ECO:0007669"/>
    <property type="project" value="UniProtKB-UniRule"/>
</dbReference>
<dbReference type="GO" id="GO:0016740">
    <property type="term" value="F:transferase activity"/>
    <property type="evidence" value="ECO:0007669"/>
    <property type="project" value="UniProtKB-ARBA"/>
</dbReference>
<dbReference type="GO" id="GO:0000049">
    <property type="term" value="F:tRNA binding"/>
    <property type="evidence" value="ECO:0007669"/>
    <property type="project" value="UniProtKB-KW"/>
</dbReference>
<dbReference type="GO" id="GO:0006432">
    <property type="term" value="P:phenylalanyl-tRNA aminoacylation"/>
    <property type="evidence" value="ECO:0000318"/>
    <property type="project" value="GO_Central"/>
</dbReference>
<dbReference type="CDD" id="cd00769">
    <property type="entry name" value="PheRS_beta_core"/>
    <property type="match status" value="1"/>
</dbReference>
<dbReference type="CDD" id="cd02796">
    <property type="entry name" value="tRNA_bind_bactPheRS"/>
    <property type="match status" value="1"/>
</dbReference>
<dbReference type="FunFam" id="2.40.50.140:FF:000045">
    <property type="entry name" value="Phenylalanine--tRNA ligase beta subunit"/>
    <property type="match status" value="1"/>
</dbReference>
<dbReference type="FunFam" id="3.30.56.10:FF:000002">
    <property type="entry name" value="Phenylalanine--tRNA ligase beta subunit"/>
    <property type="match status" value="1"/>
</dbReference>
<dbReference type="FunFam" id="3.30.70.380:FF:000001">
    <property type="entry name" value="Phenylalanine--tRNA ligase beta subunit"/>
    <property type="match status" value="1"/>
</dbReference>
<dbReference type="FunFam" id="3.30.930.10:FF:000022">
    <property type="entry name" value="Phenylalanine--tRNA ligase beta subunit"/>
    <property type="match status" value="1"/>
</dbReference>
<dbReference type="FunFam" id="3.50.40.10:FF:000001">
    <property type="entry name" value="Phenylalanine--tRNA ligase beta subunit"/>
    <property type="match status" value="1"/>
</dbReference>
<dbReference type="Gene3D" id="3.30.56.10">
    <property type="match status" value="2"/>
</dbReference>
<dbReference type="Gene3D" id="3.30.930.10">
    <property type="entry name" value="Bira Bifunctional Protein, Domain 2"/>
    <property type="match status" value="1"/>
</dbReference>
<dbReference type="Gene3D" id="3.30.70.380">
    <property type="entry name" value="Ferrodoxin-fold anticodon-binding domain"/>
    <property type="match status" value="1"/>
</dbReference>
<dbReference type="Gene3D" id="2.40.50.140">
    <property type="entry name" value="Nucleic acid-binding proteins"/>
    <property type="match status" value="1"/>
</dbReference>
<dbReference type="Gene3D" id="3.50.40.10">
    <property type="entry name" value="Phenylalanyl-trna Synthetase, Chain B, domain 3"/>
    <property type="match status" value="1"/>
</dbReference>
<dbReference type="HAMAP" id="MF_00283">
    <property type="entry name" value="Phe_tRNA_synth_beta1"/>
    <property type="match status" value="1"/>
</dbReference>
<dbReference type="InterPro" id="IPR045864">
    <property type="entry name" value="aa-tRNA-synth_II/BPL/LPL"/>
</dbReference>
<dbReference type="InterPro" id="IPR005146">
    <property type="entry name" value="B3/B4_tRNA-bd"/>
</dbReference>
<dbReference type="InterPro" id="IPR009061">
    <property type="entry name" value="DNA-bd_dom_put_sf"/>
</dbReference>
<dbReference type="InterPro" id="IPR005121">
    <property type="entry name" value="Fdx_antiC-bd"/>
</dbReference>
<dbReference type="InterPro" id="IPR036690">
    <property type="entry name" value="Fdx_antiC-bd_sf"/>
</dbReference>
<dbReference type="InterPro" id="IPR012340">
    <property type="entry name" value="NA-bd_OB-fold"/>
</dbReference>
<dbReference type="InterPro" id="IPR045060">
    <property type="entry name" value="Phe-tRNA-ligase_IIc_bsu"/>
</dbReference>
<dbReference type="InterPro" id="IPR004532">
    <property type="entry name" value="Phe-tRNA-ligase_IIc_bsu_bact"/>
</dbReference>
<dbReference type="InterPro" id="IPR020825">
    <property type="entry name" value="Phe-tRNA_synthase-like_B3/B4"/>
</dbReference>
<dbReference type="InterPro" id="IPR041616">
    <property type="entry name" value="PheRS_beta_core"/>
</dbReference>
<dbReference type="InterPro" id="IPR002547">
    <property type="entry name" value="tRNA-bd_dom"/>
</dbReference>
<dbReference type="InterPro" id="IPR033714">
    <property type="entry name" value="tRNA_bind_bactPheRS"/>
</dbReference>
<dbReference type="InterPro" id="IPR005147">
    <property type="entry name" value="tRNA_synthase_B5-dom"/>
</dbReference>
<dbReference type="NCBIfam" id="TIGR00472">
    <property type="entry name" value="pheT_bact"/>
    <property type="match status" value="1"/>
</dbReference>
<dbReference type="NCBIfam" id="NF045760">
    <property type="entry name" value="YtpR"/>
    <property type="match status" value="1"/>
</dbReference>
<dbReference type="PANTHER" id="PTHR10947:SF0">
    <property type="entry name" value="PHENYLALANINE--TRNA LIGASE BETA SUBUNIT"/>
    <property type="match status" value="1"/>
</dbReference>
<dbReference type="PANTHER" id="PTHR10947">
    <property type="entry name" value="PHENYLALANYL-TRNA SYNTHETASE BETA CHAIN AND LEUCINE-RICH REPEAT-CONTAINING PROTEIN 47"/>
    <property type="match status" value="1"/>
</dbReference>
<dbReference type="Pfam" id="PF03483">
    <property type="entry name" value="B3_4"/>
    <property type="match status" value="1"/>
</dbReference>
<dbReference type="Pfam" id="PF03484">
    <property type="entry name" value="B5"/>
    <property type="match status" value="1"/>
</dbReference>
<dbReference type="Pfam" id="PF03147">
    <property type="entry name" value="FDX-ACB"/>
    <property type="match status" value="1"/>
</dbReference>
<dbReference type="Pfam" id="PF01588">
    <property type="entry name" value="tRNA_bind"/>
    <property type="match status" value="1"/>
</dbReference>
<dbReference type="Pfam" id="PF17759">
    <property type="entry name" value="tRNA_synthFbeta"/>
    <property type="match status" value="1"/>
</dbReference>
<dbReference type="SMART" id="SM00873">
    <property type="entry name" value="B3_4"/>
    <property type="match status" value="1"/>
</dbReference>
<dbReference type="SMART" id="SM00874">
    <property type="entry name" value="B5"/>
    <property type="match status" value="1"/>
</dbReference>
<dbReference type="SMART" id="SM00896">
    <property type="entry name" value="FDX-ACB"/>
    <property type="match status" value="1"/>
</dbReference>
<dbReference type="SUPFAM" id="SSF54991">
    <property type="entry name" value="Anticodon-binding domain of PheRS"/>
    <property type="match status" value="1"/>
</dbReference>
<dbReference type="SUPFAM" id="SSF55681">
    <property type="entry name" value="Class II aaRS and biotin synthetases"/>
    <property type="match status" value="1"/>
</dbReference>
<dbReference type="SUPFAM" id="SSF50249">
    <property type="entry name" value="Nucleic acid-binding proteins"/>
    <property type="match status" value="1"/>
</dbReference>
<dbReference type="SUPFAM" id="SSF56037">
    <property type="entry name" value="PheT/TilS domain"/>
    <property type="match status" value="1"/>
</dbReference>
<dbReference type="SUPFAM" id="SSF46955">
    <property type="entry name" value="Putative DNA-binding domain"/>
    <property type="match status" value="1"/>
</dbReference>
<dbReference type="PROSITE" id="PS51483">
    <property type="entry name" value="B5"/>
    <property type="match status" value="1"/>
</dbReference>
<dbReference type="PROSITE" id="PS51447">
    <property type="entry name" value="FDX_ACB"/>
    <property type="match status" value="1"/>
</dbReference>
<dbReference type="PROSITE" id="PS50886">
    <property type="entry name" value="TRBD"/>
    <property type="match status" value="1"/>
</dbReference>
<protein>
    <recommendedName>
        <fullName evidence="1">Phenylalanine--tRNA ligase beta subunit</fullName>
        <ecNumber evidence="1">6.1.1.20</ecNumber>
    </recommendedName>
    <alternativeName>
        <fullName evidence="1">Phenylalanyl-tRNA synthetase beta subunit</fullName>
        <shortName evidence="1">PheRS</shortName>
    </alternativeName>
</protein>
<name>SYFB_BACCR</name>
<comment type="catalytic activity">
    <reaction evidence="1">
        <text>tRNA(Phe) + L-phenylalanine + ATP = L-phenylalanyl-tRNA(Phe) + AMP + diphosphate + H(+)</text>
        <dbReference type="Rhea" id="RHEA:19413"/>
        <dbReference type="Rhea" id="RHEA-COMP:9668"/>
        <dbReference type="Rhea" id="RHEA-COMP:9699"/>
        <dbReference type="ChEBI" id="CHEBI:15378"/>
        <dbReference type="ChEBI" id="CHEBI:30616"/>
        <dbReference type="ChEBI" id="CHEBI:33019"/>
        <dbReference type="ChEBI" id="CHEBI:58095"/>
        <dbReference type="ChEBI" id="CHEBI:78442"/>
        <dbReference type="ChEBI" id="CHEBI:78531"/>
        <dbReference type="ChEBI" id="CHEBI:456215"/>
        <dbReference type="EC" id="6.1.1.20"/>
    </reaction>
</comment>
<comment type="cofactor">
    <cofactor evidence="1">
        <name>Mg(2+)</name>
        <dbReference type="ChEBI" id="CHEBI:18420"/>
    </cofactor>
    <text evidence="1">Binds 2 magnesium ions per tetramer.</text>
</comment>
<comment type="subunit">
    <text evidence="1">Tetramer of two alpha and two beta subunits.</text>
</comment>
<comment type="subcellular location">
    <subcellularLocation>
        <location evidence="1">Cytoplasm</location>
    </subcellularLocation>
</comment>
<comment type="similarity">
    <text evidence="1">Belongs to the phenylalanyl-tRNA synthetase beta subunit family. Type 1 subfamily.</text>
</comment>
<evidence type="ECO:0000255" key="1">
    <source>
        <dbReference type="HAMAP-Rule" id="MF_00283"/>
    </source>
</evidence>
<feature type="chain" id="PRO_0000126838" description="Phenylalanine--tRNA ligase beta subunit">
    <location>
        <begin position="1"/>
        <end position="806"/>
    </location>
</feature>
<feature type="domain" description="tRNA-binding" evidence="1">
    <location>
        <begin position="40"/>
        <end position="155"/>
    </location>
</feature>
<feature type="domain" description="B5" evidence="1">
    <location>
        <begin position="409"/>
        <end position="484"/>
    </location>
</feature>
<feature type="domain" description="FDX-ACB" evidence="1">
    <location>
        <begin position="712"/>
        <end position="805"/>
    </location>
</feature>
<feature type="binding site" evidence="1">
    <location>
        <position position="462"/>
    </location>
    <ligand>
        <name>Mg(2+)</name>
        <dbReference type="ChEBI" id="CHEBI:18420"/>
        <note>shared with alpha subunit</note>
    </ligand>
</feature>
<feature type="binding site" evidence="1">
    <location>
        <position position="468"/>
    </location>
    <ligand>
        <name>Mg(2+)</name>
        <dbReference type="ChEBI" id="CHEBI:18420"/>
        <note>shared with alpha subunit</note>
    </ligand>
</feature>
<feature type="binding site" evidence="1">
    <location>
        <position position="471"/>
    </location>
    <ligand>
        <name>Mg(2+)</name>
        <dbReference type="ChEBI" id="CHEBI:18420"/>
        <note>shared with alpha subunit</note>
    </ligand>
</feature>
<feature type="binding site" evidence="1">
    <location>
        <position position="472"/>
    </location>
    <ligand>
        <name>Mg(2+)</name>
        <dbReference type="ChEBI" id="CHEBI:18420"/>
        <note>shared with alpha subunit</note>
    </ligand>
</feature>
<organism>
    <name type="scientific">Bacillus cereus (strain ATCC 14579 / DSM 31 / CCUG 7414 / JCM 2152 / NBRC 15305 / NCIMB 9373 / NCTC 2599 / NRRL B-3711)</name>
    <dbReference type="NCBI Taxonomy" id="226900"/>
    <lineage>
        <taxon>Bacteria</taxon>
        <taxon>Bacillati</taxon>
        <taxon>Bacillota</taxon>
        <taxon>Bacilli</taxon>
        <taxon>Bacillales</taxon>
        <taxon>Bacillaceae</taxon>
        <taxon>Bacillus</taxon>
        <taxon>Bacillus cereus group</taxon>
    </lineage>
</organism>
<proteinExistence type="inferred from homology"/>
<sequence length="806" mass="88439">MFVSYRWLQEYVDIKDVTAQELADKITKSGIEVEGVEVLNKGVKGVVVGHVLECEKHPEADKLSKCLIDIGEEEPVQIICGAANIAKGLKVPVAKVGAVLPGNFKIKKAKLRGEASHGMVCALQELGIDGKLVSKEYADGIFIFPSDAEVGADALEILNLHDEVLELGLTPNRADCLNMLGVAYEVAAIYGREVKLPAIDLQETAEKTSDYISVSVEAKEENPLYIAKMVKNVKIGPSPMWMQTRLMAAGIRPISNVVDITNYILMEYGQPLHAFDYDKLGSKEIVVRLAKEGEKIETLDDQERTLQSHHLVITNGTKALAVAGVMGGADSEVTNETVNVLIESAYFAGQTVRRTSKDLGLRSESSARFEKGIDPTRTFEAIQHAAALMAKYAGGEALEGVVEADNLQVQERTVSVTAEKVNRVLGTNISASEMGTMFTNLKFPFTEVEGTFHVNVPARRPDITISEDLVEEVGRLYGYDHIPVTLPSGTMTRGKLTSAQTKRRKVRRFLEGAGLYEAITYSLTSADKAKQYMVEPNEKAPVGLALPMSEERSQLRLSLVPQLLEAVSYNVARKNDSVALYEVGSIFLPTEEGELPKEEQHLAGVMTGLALHHAWQGEKKVVDFFVVKGVLEGLFDVLGVANQITYAPAKREGMHPGRTADIVLDGEVIGFIGQLHPEAEKQLDVKNTFVFELSLVKVFGADAEETYYAAIPRFPSMTRDMAVVVTKETKAGEMKQVIAEAGGELLKDVTLFDLYEGEKMEEGKKSLAFSMTYFDAERTLTDEEVTEAHNRVLTTVEEKFGAELRK</sequence>
<gene>
    <name evidence="1" type="primary">pheT</name>
    <name type="ordered locus">BC_4560</name>
</gene>
<accession>Q817I7</accession>